<feature type="signal peptide" evidence="3">
    <location>
        <begin position="1"/>
        <end position="33"/>
    </location>
</feature>
<feature type="chain" id="PRO_0000247334" description="Putative divalent cation/proton antiporter TMEM165">
    <location>
        <begin position="34"/>
        <end position="324"/>
    </location>
</feature>
<feature type="topological domain" description="Lumenal" evidence="3">
    <location>
        <begin position="34"/>
        <end position="89"/>
    </location>
</feature>
<feature type="transmembrane region" description="Helical" evidence="3">
    <location>
        <begin position="90"/>
        <end position="110"/>
    </location>
</feature>
<feature type="topological domain" description="Cytoplasmic" evidence="3">
    <location>
        <begin position="111"/>
        <end position="126"/>
    </location>
</feature>
<feature type="transmembrane region" description="Helical" evidence="3">
    <location>
        <begin position="127"/>
        <end position="147"/>
    </location>
</feature>
<feature type="topological domain" description="Lumenal" evidence="3">
    <location>
        <begin position="148"/>
        <end position="151"/>
    </location>
</feature>
<feature type="transmembrane region" description="Helical" evidence="3">
    <location>
        <begin position="152"/>
        <end position="172"/>
    </location>
</feature>
<feature type="topological domain" description="Cytoplasmic" evidence="3">
    <location>
        <begin position="173"/>
        <end position="228"/>
    </location>
</feature>
<feature type="transmembrane region" description="Helical" evidence="3">
    <location>
        <begin position="229"/>
        <end position="249"/>
    </location>
</feature>
<feature type="topological domain" description="Lumenal" evidence="3">
    <location>
        <begin position="250"/>
        <end position="267"/>
    </location>
</feature>
<feature type="transmembrane region" description="Helical" evidence="3">
    <location>
        <begin position="268"/>
        <end position="288"/>
    </location>
</feature>
<feature type="topological domain" description="Cytoplasmic" evidence="3">
    <location>
        <begin position="289"/>
        <end position="299"/>
    </location>
</feature>
<feature type="transmembrane region" description="Helical" evidence="3">
    <location>
        <begin position="300"/>
        <end position="320"/>
    </location>
</feature>
<feature type="topological domain" description="Lumenal" evidence="3">
    <location>
        <begin position="321"/>
        <end position="324"/>
    </location>
</feature>
<feature type="region of interest" description="Disordered" evidence="4">
    <location>
        <begin position="35"/>
        <end position="59"/>
    </location>
</feature>
<feature type="coiled-coil region" evidence="3">
    <location>
        <begin position="184"/>
        <end position="211"/>
    </location>
</feature>
<feature type="compositionally biased region" description="Basic and acidic residues" evidence="4">
    <location>
        <begin position="35"/>
        <end position="45"/>
    </location>
</feature>
<feature type="compositionally biased region" description="Low complexity" evidence="4">
    <location>
        <begin position="50"/>
        <end position="59"/>
    </location>
</feature>
<feature type="splice variant" id="VSP_056691" description="In isoform 2." evidence="11">
    <original>MAAAAPGNGRASAPRLLLLFLVPLLWAPAAVRAGPDEDLSHRNKEPPAPAQQLQPQPVAVQGPEPARVE</original>
    <variation>MEIPMQ</variation>
    <location>
        <begin position="1"/>
        <end position="69"/>
    </location>
</feature>
<feature type="sequence variant" id="VAR_088436" description="In CDG2K; does not affect the affinity for Ca(2+) and Mn(2+) ions." evidence="10">
    <original>E</original>
    <variation>G</variation>
    <location>
        <position position="108"/>
    </location>
</feature>
<feature type="sequence variant" id="VAR_068446" description="In CDG2K; alters subcellular location; displays decreased affinity for Ca(2+) ions; does not affect the affinity for Mn(2+) ions; dbSNP:rs387907222." evidence="5 8 10">
    <original>R</original>
    <variation>C</variation>
    <location>
        <position position="126"/>
    </location>
</feature>
<feature type="sequence variant" id="VAR_068447" description="In CDG2K; alters subcellular location; does not affect the affinity for Ca(2+) and Mn(2+) ions; dbSNP:rs387907221." evidence="5 8 10">
    <original>R</original>
    <variation>H</variation>
    <location>
        <position position="126"/>
    </location>
</feature>
<feature type="sequence variant" id="VAR_068448" description="In CDG2K; accumulates in Golgi compartment; displays decreased affinity for Ca(2+) ions; does not affect the affinity for Mn(2+) ions; dbSNP:rs886037631." evidence="5 8 10">
    <original>G</original>
    <variation>R</variation>
    <location>
        <position position="304"/>
    </location>
</feature>
<feature type="mutagenesis site" description="Alters subcellular location." evidence="8">
    <original>Y</original>
    <variation>S</variation>
    <location>
        <position position="124"/>
    </location>
</feature>
<feature type="mutagenesis site" description="No effect on subcellular location." evidence="8">
    <original>L</original>
    <variation>G</variation>
    <location>
        <position position="127"/>
    </location>
</feature>
<feature type="mutagenesis site" description="No effect on subcellular location." evidence="8">
    <original>LL</original>
    <variation>GG</variation>
    <location>
        <begin position="209"/>
        <end position="210"/>
    </location>
</feature>
<comment type="function">
    <text evidence="1 2 5 7 9 10">Putative divalent cation:proton antiporter that exchanges calcium or manganese ions for protons across the Golgi membrane. Mediates the reversible transport of calcium or manganese to the Golgi lumen driven by the proton gradient and possibly the membrane potential generated by V-ATPase. Provides calcium or manganese cofactors to resident Golgi enzymes and contributes to the maintenance of an acidic luminal Golgi pH required for proper functioning of the secretory pathway (By similarity) (PubMed:22683087, PubMed:23569283, PubMed:27008884, PubMed:32047108). Promotes Ca(2+) storage within the Golgi lumen of the mammary epithelial cells to be then secreted into milk (By similarity). The transport mechanism and stoichiometry remains to be elucidated.</text>
</comment>
<comment type="catalytic activity">
    <reaction evidence="14">
        <text>Ca(2+)(in) + n H(+)(out) = Ca(2+)(out) + n H(+)(in)</text>
        <dbReference type="Rhea" id="RHEA:76631"/>
        <dbReference type="ChEBI" id="CHEBI:15378"/>
        <dbReference type="ChEBI" id="CHEBI:29108"/>
    </reaction>
</comment>
<comment type="catalytic activity">
    <reaction evidence="14">
        <text>Mn(2+)(in) + n H(+)(out) = Mn(2+)(out) + n H(+)(in)</text>
        <dbReference type="Rhea" id="RHEA:76635"/>
        <dbReference type="ChEBI" id="CHEBI:15378"/>
        <dbReference type="ChEBI" id="CHEBI:29035"/>
    </reaction>
</comment>
<comment type="biophysicochemical properties">
    <kinetics>
        <KM evidence="10">21 uM for Ca(2+)</KM>
        <KM evidence="10">170 uM for Mn(2+)</KM>
    </kinetics>
</comment>
<comment type="subcellular location">
    <subcellularLocation>
        <location evidence="2">Golgi apparatus membrane</location>
        <topology evidence="3">Multi-pass membrane protein</topology>
    </subcellularLocation>
</comment>
<comment type="alternative products">
    <event type="alternative splicing"/>
    <isoform>
        <id>Q9HC07-1</id>
        <name>1</name>
        <sequence type="displayed"/>
    </isoform>
    <isoform>
        <id>Q9HC07-2</id>
        <name>2</name>
        <sequence type="described" ref="VSP_056691"/>
    </isoform>
</comment>
<comment type="tissue specificity">
    <text evidence="5">Ubiquitously expressed.</text>
</comment>
<comment type="disease" evidence="5 6 8 10">
    <disease id="DI-03483">
        <name>Congenital disorder of glycosylation 2K</name>
        <acronym>CDG2K</acronym>
        <description>An autosomal recessive disorder with a variable phenotype. Affected individuals show psychomotor retardation and growth retardation, and most have short stature. Other features include dysmorphism, hypotonia, eye abnormalities, acquired microcephaly, hepatomegaly, and skeletal dysplasia. Congenital disorders of glycosylation are caused by a defect in glycoprotein biosynthesis and characterized by under-glycosylated serum glycoproteins and a wide variety of clinical features. The broad spectrum of features reflects the critical role of N-glycoproteins during embryonic development, differentiation, and maintenance of cell functions.</description>
        <dbReference type="MIM" id="614727"/>
    </disease>
    <text>The disease is caused by variants affecting the gene represented in this entry.</text>
</comment>
<comment type="similarity">
    <text evidence="13">Belongs to the GDT1 family.</text>
</comment>
<comment type="sequence caution" evidence="13">
    <conflict type="frameshift">
        <sequence resource="EMBL-CDS" id="AAF67653"/>
    </conflict>
</comment>
<proteinExistence type="evidence at protein level"/>
<evidence type="ECO:0000250" key="1">
    <source>
        <dbReference type="UniProtKB" id="P38301"/>
    </source>
</evidence>
<evidence type="ECO:0000250" key="2">
    <source>
        <dbReference type="UniProtKB" id="P52875"/>
    </source>
</evidence>
<evidence type="ECO:0000255" key="3"/>
<evidence type="ECO:0000256" key="4">
    <source>
        <dbReference type="SAM" id="MobiDB-lite"/>
    </source>
</evidence>
<evidence type="ECO:0000269" key="5">
    <source>
    </source>
</evidence>
<evidence type="ECO:0000269" key="6">
    <source>
    </source>
</evidence>
<evidence type="ECO:0000269" key="7">
    <source>
    </source>
</evidence>
<evidence type="ECO:0000269" key="8">
    <source>
    </source>
</evidence>
<evidence type="ECO:0000269" key="9">
    <source>
    </source>
</evidence>
<evidence type="ECO:0000269" key="10">
    <source>
    </source>
</evidence>
<evidence type="ECO:0000303" key="11">
    <source>
    </source>
</evidence>
<evidence type="ECO:0000303" key="12">
    <source>
    </source>
</evidence>
<evidence type="ECO:0000305" key="13"/>
<evidence type="ECO:0000305" key="14">
    <source>
    </source>
</evidence>
<evidence type="ECO:0000312" key="15">
    <source>
        <dbReference type="HGNC" id="HGNC:30760"/>
    </source>
</evidence>
<organism>
    <name type="scientific">Homo sapiens</name>
    <name type="common">Human</name>
    <dbReference type="NCBI Taxonomy" id="9606"/>
    <lineage>
        <taxon>Eukaryota</taxon>
        <taxon>Metazoa</taxon>
        <taxon>Chordata</taxon>
        <taxon>Craniata</taxon>
        <taxon>Vertebrata</taxon>
        <taxon>Euteleostomi</taxon>
        <taxon>Mammalia</taxon>
        <taxon>Eutheria</taxon>
        <taxon>Euarchontoglires</taxon>
        <taxon>Primates</taxon>
        <taxon>Haplorrhini</taxon>
        <taxon>Catarrhini</taxon>
        <taxon>Hominidae</taxon>
        <taxon>Homo</taxon>
    </lineage>
</organism>
<keyword id="KW-0025">Alternative splicing</keyword>
<keyword id="KW-0050">Antiport</keyword>
<keyword id="KW-0175">Coiled coil</keyword>
<keyword id="KW-0900">Congenital disorder of glycosylation</keyword>
<keyword id="KW-0225">Disease variant</keyword>
<keyword id="KW-0333">Golgi apparatus</keyword>
<keyword id="KW-0472">Membrane</keyword>
<keyword id="KW-1267">Proteomics identification</keyword>
<keyword id="KW-1185">Reference proteome</keyword>
<keyword id="KW-0732">Signal</keyword>
<keyword id="KW-0812">Transmembrane</keyword>
<keyword id="KW-1133">Transmembrane helix</keyword>
<keyword id="KW-0813">Transport</keyword>
<protein>
    <recommendedName>
        <fullName evidence="14">Putative divalent cation/proton antiporter TMEM165</fullName>
    </recommendedName>
    <alternativeName>
        <fullName>Transmembrane protein 165</fullName>
    </alternativeName>
    <alternativeName>
        <fullName>Transmembrane protein PT27</fullName>
    </alternativeName>
    <alternativeName>
        <fullName>Transmembrane protein TPARL</fullName>
    </alternativeName>
</protein>
<sequence>MAAAAPGNGRASAPRLLLLFLVPLLWAPAAVRAGPDEDLSHRNKEPPAPAQQLQPQPVAVQGPEPARVEKIFTPAAPVHTNKEDPATQTNLGFIHAFVAAISVIIVSELGDKTFFIAAIMAMRYNRLTVLAGAMLALGLMTCLSVLFGYATTVIPRVYTYYVSTVLFAIFGIRMLREGLKMSPDEGQEELEEVQAELKKKDEEFQRTKLLNGPGDVETGTSITVPQKKWLHFISPIFVQALTLTFLAEWGDRSQLTTIVLAAREDPYGVAVGGTVGHCLCTGLAVIGGRMIAQKISVRTVTIIGGIVFLAFAFSALFISPDSGF</sequence>
<accession>Q9HC07</accession>
<accession>A8K3P8</accession>
<accession>B4DHW1</accession>
<accession>Q9BTN9</accession>
<accession>Q9NZ34</accession>
<gene>
    <name evidence="12 15" type="primary">TMEM165</name>
    <name type="synonym">TPARL</name>
</gene>
<reference key="1">
    <citation type="submission" date="1999-03" db="EMBL/GenBank/DDBJ databases">
        <title>Cloning of a new human cDNA homologous to Mus musculus transmembrane protein.</title>
        <authorList>
            <person name="Yue P."/>
            <person name="Yu L."/>
            <person name="Zhao S.Y."/>
        </authorList>
    </citation>
    <scope>NUCLEOTIDE SEQUENCE [MRNA] (ISOFORM 1)</scope>
</reference>
<reference key="2">
    <citation type="journal article" date="2000" name="Proc. Natl. Acad. Sci. U.S.A.">
        <title>Gene expression profiling in the human hypothalamus-pituitary-adrenal axis and full-length cDNA cloning.</title>
        <authorList>
            <person name="Hu R.-M."/>
            <person name="Han Z.-G."/>
            <person name="Song H.-D."/>
            <person name="Peng Y.-D."/>
            <person name="Huang Q.-H."/>
            <person name="Ren S.-X."/>
            <person name="Gu Y.-J."/>
            <person name="Huang C.-H."/>
            <person name="Li Y.-B."/>
            <person name="Jiang C.-L."/>
            <person name="Fu G."/>
            <person name="Zhang Q.-H."/>
            <person name="Gu B.-W."/>
            <person name="Dai M."/>
            <person name="Mao Y.-F."/>
            <person name="Gao G.-F."/>
            <person name="Rong R."/>
            <person name="Ye M."/>
            <person name="Zhou J."/>
            <person name="Xu S.-H."/>
            <person name="Gu J."/>
            <person name="Shi J.-X."/>
            <person name="Jin W.-R."/>
            <person name="Zhang C.-K."/>
            <person name="Wu T.-M."/>
            <person name="Huang G.-Y."/>
            <person name="Chen Z."/>
            <person name="Chen M.-D."/>
            <person name="Chen J.-L."/>
        </authorList>
    </citation>
    <scope>NUCLEOTIDE SEQUENCE [LARGE SCALE MRNA] (ISOFORM 1)</scope>
    <source>
        <tissue>Hypothalamus</tissue>
    </source>
</reference>
<reference key="3">
    <citation type="journal article" date="2004" name="Nat. Genet.">
        <title>Complete sequencing and characterization of 21,243 full-length human cDNAs.</title>
        <authorList>
            <person name="Ota T."/>
            <person name="Suzuki Y."/>
            <person name="Nishikawa T."/>
            <person name="Otsuki T."/>
            <person name="Sugiyama T."/>
            <person name="Irie R."/>
            <person name="Wakamatsu A."/>
            <person name="Hayashi K."/>
            <person name="Sato H."/>
            <person name="Nagai K."/>
            <person name="Kimura K."/>
            <person name="Makita H."/>
            <person name="Sekine M."/>
            <person name="Obayashi M."/>
            <person name="Nishi T."/>
            <person name="Shibahara T."/>
            <person name="Tanaka T."/>
            <person name="Ishii S."/>
            <person name="Yamamoto J."/>
            <person name="Saito K."/>
            <person name="Kawai Y."/>
            <person name="Isono Y."/>
            <person name="Nakamura Y."/>
            <person name="Nagahari K."/>
            <person name="Murakami K."/>
            <person name="Yasuda T."/>
            <person name="Iwayanagi T."/>
            <person name="Wagatsuma M."/>
            <person name="Shiratori A."/>
            <person name="Sudo H."/>
            <person name="Hosoiri T."/>
            <person name="Kaku Y."/>
            <person name="Kodaira H."/>
            <person name="Kondo H."/>
            <person name="Sugawara M."/>
            <person name="Takahashi M."/>
            <person name="Kanda K."/>
            <person name="Yokoi T."/>
            <person name="Furuya T."/>
            <person name="Kikkawa E."/>
            <person name="Omura Y."/>
            <person name="Abe K."/>
            <person name="Kamihara K."/>
            <person name="Katsuta N."/>
            <person name="Sato K."/>
            <person name="Tanikawa M."/>
            <person name="Yamazaki M."/>
            <person name="Ninomiya K."/>
            <person name="Ishibashi T."/>
            <person name="Yamashita H."/>
            <person name="Murakawa K."/>
            <person name="Fujimori K."/>
            <person name="Tanai H."/>
            <person name="Kimata M."/>
            <person name="Watanabe M."/>
            <person name="Hiraoka S."/>
            <person name="Chiba Y."/>
            <person name="Ishida S."/>
            <person name="Ono Y."/>
            <person name="Takiguchi S."/>
            <person name="Watanabe S."/>
            <person name="Yosida M."/>
            <person name="Hotuta T."/>
            <person name="Kusano J."/>
            <person name="Kanehori K."/>
            <person name="Takahashi-Fujii A."/>
            <person name="Hara H."/>
            <person name="Tanase T.-O."/>
            <person name="Nomura Y."/>
            <person name="Togiya S."/>
            <person name="Komai F."/>
            <person name="Hara R."/>
            <person name="Takeuchi K."/>
            <person name="Arita M."/>
            <person name="Imose N."/>
            <person name="Musashino K."/>
            <person name="Yuuki H."/>
            <person name="Oshima A."/>
            <person name="Sasaki N."/>
            <person name="Aotsuka S."/>
            <person name="Yoshikawa Y."/>
            <person name="Matsunawa H."/>
            <person name="Ichihara T."/>
            <person name="Shiohata N."/>
            <person name="Sano S."/>
            <person name="Moriya S."/>
            <person name="Momiyama H."/>
            <person name="Satoh N."/>
            <person name="Takami S."/>
            <person name="Terashima Y."/>
            <person name="Suzuki O."/>
            <person name="Nakagawa S."/>
            <person name="Senoh A."/>
            <person name="Mizoguchi H."/>
            <person name="Goto Y."/>
            <person name="Shimizu F."/>
            <person name="Wakebe H."/>
            <person name="Hishigaki H."/>
            <person name="Watanabe T."/>
            <person name="Sugiyama A."/>
            <person name="Takemoto M."/>
            <person name="Kawakami B."/>
            <person name="Yamazaki M."/>
            <person name="Watanabe K."/>
            <person name="Kumagai A."/>
            <person name="Itakura S."/>
            <person name="Fukuzumi Y."/>
            <person name="Fujimori Y."/>
            <person name="Komiyama M."/>
            <person name="Tashiro H."/>
            <person name="Tanigami A."/>
            <person name="Fujiwara T."/>
            <person name="Ono T."/>
            <person name="Yamada K."/>
            <person name="Fujii Y."/>
            <person name="Ozaki K."/>
            <person name="Hirao M."/>
            <person name="Ohmori Y."/>
            <person name="Kawabata A."/>
            <person name="Hikiji T."/>
            <person name="Kobatake N."/>
            <person name="Inagaki H."/>
            <person name="Ikema Y."/>
            <person name="Okamoto S."/>
            <person name="Okitani R."/>
            <person name="Kawakami T."/>
            <person name="Noguchi S."/>
            <person name="Itoh T."/>
            <person name="Shigeta K."/>
            <person name="Senba T."/>
            <person name="Matsumura K."/>
            <person name="Nakajima Y."/>
            <person name="Mizuno T."/>
            <person name="Morinaga M."/>
            <person name="Sasaki M."/>
            <person name="Togashi T."/>
            <person name="Oyama M."/>
            <person name="Hata H."/>
            <person name="Watanabe M."/>
            <person name="Komatsu T."/>
            <person name="Mizushima-Sugano J."/>
            <person name="Satoh T."/>
            <person name="Shirai Y."/>
            <person name="Takahashi Y."/>
            <person name="Nakagawa K."/>
            <person name="Okumura K."/>
            <person name="Nagase T."/>
            <person name="Nomura N."/>
            <person name="Kikuchi H."/>
            <person name="Masuho Y."/>
            <person name="Yamashita R."/>
            <person name="Nakai K."/>
            <person name="Yada T."/>
            <person name="Nakamura Y."/>
            <person name="Ohara O."/>
            <person name="Isogai T."/>
            <person name="Sugano S."/>
        </authorList>
    </citation>
    <scope>NUCLEOTIDE SEQUENCE [LARGE SCALE MRNA] (ISOFORMS 1 AND 2)</scope>
    <source>
        <tissue>Caudate nucleus</tissue>
    </source>
</reference>
<reference key="4">
    <citation type="journal article" date="2005" name="Nature">
        <title>Generation and annotation of the DNA sequences of human chromosomes 2 and 4.</title>
        <authorList>
            <person name="Hillier L.W."/>
            <person name="Graves T.A."/>
            <person name="Fulton R.S."/>
            <person name="Fulton L.A."/>
            <person name="Pepin K.H."/>
            <person name="Minx P."/>
            <person name="Wagner-McPherson C."/>
            <person name="Layman D."/>
            <person name="Wylie K."/>
            <person name="Sekhon M."/>
            <person name="Becker M.C."/>
            <person name="Fewell G.A."/>
            <person name="Delehaunty K.D."/>
            <person name="Miner T.L."/>
            <person name="Nash W.E."/>
            <person name="Kremitzki C."/>
            <person name="Oddy L."/>
            <person name="Du H."/>
            <person name="Sun H."/>
            <person name="Bradshaw-Cordum H."/>
            <person name="Ali J."/>
            <person name="Carter J."/>
            <person name="Cordes M."/>
            <person name="Harris A."/>
            <person name="Isak A."/>
            <person name="van Brunt A."/>
            <person name="Nguyen C."/>
            <person name="Du F."/>
            <person name="Courtney L."/>
            <person name="Kalicki J."/>
            <person name="Ozersky P."/>
            <person name="Abbott S."/>
            <person name="Armstrong J."/>
            <person name="Belter E.A."/>
            <person name="Caruso L."/>
            <person name="Cedroni M."/>
            <person name="Cotton M."/>
            <person name="Davidson T."/>
            <person name="Desai A."/>
            <person name="Elliott G."/>
            <person name="Erb T."/>
            <person name="Fronick C."/>
            <person name="Gaige T."/>
            <person name="Haakenson W."/>
            <person name="Haglund K."/>
            <person name="Holmes A."/>
            <person name="Harkins R."/>
            <person name="Kim K."/>
            <person name="Kruchowski S.S."/>
            <person name="Strong C.M."/>
            <person name="Grewal N."/>
            <person name="Goyea E."/>
            <person name="Hou S."/>
            <person name="Levy A."/>
            <person name="Martinka S."/>
            <person name="Mead K."/>
            <person name="McLellan M.D."/>
            <person name="Meyer R."/>
            <person name="Randall-Maher J."/>
            <person name="Tomlinson C."/>
            <person name="Dauphin-Kohlberg S."/>
            <person name="Kozlowicz-Reilly A."/>
            <person name="Shah N."/>
            <person name="Swearengen-Shahid S."/>
            <person name="Snider J."/>
            <person name="Strong J.T."/>
            <person name="Thompson J."/>
            <person name="Yoakum M."/>
            <person name="Leonard S."/>
            <person name="Pearman C."/>
            <person name="Trani L."/>
            <person name="Radionenko M."/>
            <person name="Waligorski J.E."/>
            <person name="Wang C."/>
            <person name="Rock S.M."/>
            <person name="Tin-Wollam A.-M."/>
            <person name="Maupin R."/>
            <person name="Latreille P."/>
            <person name="Wendl M.C."/>
            <person name="Yang S.-P."/>
            <person name="Pohl C."/>
            <person name="Wallis J.W."/>
            <person name="Spieth J."/>
            <person name="Bieri T.A."/>
            <person name="Berkowicz N."/>
            <person name="Nelson J.O."/>
            <person name="Osborne J."/>
            <person name="Ding L."/>
            <person name="Meyer R."/>
            <person name="Sabo A."/>
            <person name="Shotland Y."/>
            <person name="Sinha P."/>
            <person name="Wohldmann P.E."/>
            <person name="Cook L.L."/>
            <person name="Hickenbotham M.T."/>
            <person name="Eldred J."/>
            <person name="Williams D."/>
            <person name="Jones T.A."/>
            <person name="She X."/>
            <person name="Ciccarelli F.D."/>
            <person name="Izaurralde E."/>
            <person name="Taylor J."/>
            <person name="Schmutz J."/>
            <person name="Myers R.M."/>
            <person name="Cox D.R."/>
            <person name="Huang X."/>
            <person name="McPherson J.D."/>
            <person name="Mardis E.R."/>
            <person name="Clifton S.W."/>
            <person name="Warren W.C."/>
            <person name="Chinwalla A.T."/>
            <person name="Eddy S.R."/>
            <person name="Marra M.A."/>
            <person name="Ovcharenko I."/>
            <person name="Furey T.S."/>
            <person name="Miller W."/>
            <person name="Eichler E.E."/>
            <person name="Bork P."/>
            <person name="Suyama M."/>
            <person name="Torrents D."/>
            <person name="Waterston R.H."/>
            <person name="Wilson R.K."/>
        </authorList>
    </citation>
    <scope>NUCLEOTIDE SEQUENCE [LARGE SCALE GENOMIC DNA]</scope>
</reference>
<reference key="5">
    <citation type="submission" date="2005-07" db="EMBL/GenBank/DDBJ databases">
        <authorList>
            <person name="Mural R.J."/>
            <person name="Istrail S."/>
            <person name="Sutton G.G."/>
            <person name="Florea L."/>
            <person name="Halpern A.L."/>
            <person name="Mobarry C.M."/>
            <person name="Lippert R."/>
            <person name="Walenz B."/>
            <person name="Shatkay H."/>
            <person name="Dew I."/>
            <person name="Miller J.R."/>
            <person name="Flanigan M.J."/>
            <person name="Edwards N.J."/>
            <person name="Bolanos R."/>
            <person name="Fasulo D."/>
            <person name="Halldorsson B.V."/>
            <person name="Hannenhalli S."/>
            <person name="Turner R."/>
            <person name="Yooseph S."/>
            <person name="Lu F."/>
            <person name="Nusskern D.R."/>
            <person name="Shue B.C."/>
            <person name="Zheng X.H."/>
            <person name="Zhong F."/>
            <person name="Delcher A.L."/>
            <person name="Huson D.H."/>
            <person name="Kravitz S.A."/>
            <person name="Mouchard L."/>
            <person name="Reinert K."/>
            <person name="Remington K.A."/>
            <person name="Clark A.G."/>
            <person name="Waterman M.S."/>
            <person name="Eichler E.E."/>
            <person name="Adams M.D."/>
            <person name="Hunkapiller M.W."/>
            <person name="Myers E.W."/>
            <person name="Venter J.C."/>
        </authorList>
    </citation>
    <scope>NUCLEOTIDE SEQUENCE [LARGE SCALE GENOMIC DNA]</scope>
</reference>
<reference key="6">
    <citation type="journal article" date="2004" name="Genome Res.">
        <title>The status, quality, and expansion of the NIH full-length cDNA project: the Mammalian Gene Collection (MGC).</title>
        <authorList>
            <consortium name="The MGC Project Team"/>
        </authorList>
    </citation>
    <scope>NUCLEOTIDE SEQUENCE [LARGE SCALE MRNA] (ISOFORM 1)</scope>
    <source>
        <tissue>Brain</tissue>
        <tissue>Lung</tissue>
        <tissue>Uterus</tissue>
    </source>
</reference>
<reference key="7">
    <citation type="journal article" date="2011" name="BMC Syst. Biol.">
        <title>Initial characterization of the human central proteome.</title>
        <authorList>
            <person name="Burkard T.R."/>
            <person name="Planyavsky M."/>
            <person name="Kaupe I."/>
            <person name="Breitwieser F.P."/>
            <person name="Buerckstuemmer T."/>
            <person name="Bennett K.L."/>
            <person name="Superti-Furga G."/>
            <person name="Colinge J."/>
        </authorList>
    </citation>
    <scope>IDENTIFICATION BY MASS SPECTROMETRY [LARGE SCALE ANALYSIS]</scope>
</reference>
<reference key="8">
    <citation type="journal article" date="2013" name="Hum. Mol. Genet.">
        <title>Impact of disease-causing mutations on TMEM165 subcellular localization, a recently identified protein involved in CDG-II.</title>
        <authorList>
            <person name="Rosnoblet C."/>
            <person name="Legrand D."/>
            <person name="Demaegd D."/>
            <person name="Hacine-Gherbi H."/>
            <person name="de Bettignies G."/>
            <person name="Bammens R."/>
            <person name="Borrego C."/>
            <person name="Duvet S."/>
            <person name="Morsomme P."/>
            <person name="Matthijs G."/>
            <person name="Foulquier F."/>
        </authorList>
    </citation>
    <scope>SUBCELLULAR LOCATION</scope>
    <scope>MUTAGENESIS OF TYR-124; LEU-127 AND 209-LEU-LEU-210</scope>
    <scope>CHARACTERIZATION OF VARIANTS CDG2K HIS-126; CYS-126 AND ARG-304</scope>
    <scope>TOPOLOGY</scope>
</reference>
<reference key="9">
    <citation type="journal article" date="2016" name="Hum. Mol. Genet.">
        <title>Glycosylation abnormalities in Gdt1p/TMEM165 deficient cells result from a defect in Golgi manganese homeostasis.</title>
        <authorList>
            <person name="Potelle S."/>
            <person name="Morelle W."/>
            <person name="Dulary E."/>
            <person name="Duvet S."/>
            <person name="Vicogne D."/>
            <person name="Spriet C."/>
            <person name="Krzewinski-Recchi M.A."/>
            <person name="Morsomme P."/>
            <person name="Jaeken J."/>
            <person name="Matthijs G."/>
            <person name="De Bettignies G."/>
            <person name="Foulquier F."/>
        </authorList>
    </citation>
    <scope>FUNCTION</scope>
</reference>
<reference key="10">
    <citation type="journal article" date="2020" name="J. Biol. Chem.">
        <title>The human Golgi protein TMEM165 transports calcium and manganese in yeast and bacterial cells.</title>
        <authorList>
            <person name="Stribny J."/>
            <person name="Thines L."/>
            <person name="Deschamps A."/>
            <person name="Goffin P."/>
            <person name="Morsomme P."/>
        </authorList>
    </citation>
    <scope>FUNCTION</scope>
    <scope>TRANSPORTER ACTIVITY</scope>
    <scope>BIOPHYSICOCHEMICAL PROPERTIES</scope>
    <scope>CHARATERIZATION OF VARIANTS CDG2K GLY-108; CYS-126; HIS-126 AND ARG-304</scope>
</reference>
<reference key="11">
    <citation type="journal article" date="2013" name="JIMD Rep.">
        <title>Bone dysplasia as a key feature in three patients with a novel congenital disorder of glycosylation (CDG) type II due to a deep intronic splice mutation in TMEM165.</title>
        <authorList>
            <person name="Zeevaert R."/>
            <person name="de Zegher F."/>
            <person name="Sturiale L."/>
            <person name="Garozzo D."/>
            <person name="Smet M."/>
            <person name="Moens M."/>
            <person name="Matthijs G."/>
            <person name="Jaeken J."/>
        </authorList>
    </citation>
    <scope>INVOLVEMENT IN CDG2K</scope>
</reference>
<reference key="12">
    <citation type="journal article" date="2013" name="Proc. Natl. Acad. Sci. U.S.A.">
        <title>Newly characterized Golgi-localized family of proteins is involved in calcium and pH homeostasis in yeast and human cells.</title>
        <authorList>
            <person name="Demaegd D."/>
            <person name="Foulquier F."/>
            <person name="Colinet A.S."/>
            <person name="Gremillon L."/>
            <person name="Legrand D."/>
            <person name="Mariot P."/>
            <person name="Peiter E."/>
            <person name="Van Schaftingen E."/>
            <person name="Matthijs G."/>
            <person name="Morsomme P."/>
        </authorList>
    </citation>
    <scope>FUNCTION IN CALCIUM AND PH HOMEOSTASIS</scope>
</reference>
<reference key="13">
    <citation type="journal article" date="2015" name="Proteomics">
        <title>N-terminome analysis of the human mitochondrial proteome.</title>
        <authorList>
            <person name="Vaca Jacome A.S."/>
            <person name="Rabilloud T."/>
            <person name="Schaeffer-Reiss C."/>
            <person name="Rompais M."/>
            <person name="Ayoub D."/>
            <person name="Lane L."/>
            <person name="Bairoch A."/>
            <person name="Van Dorsselaer A."/>
            <person name="Carapito C."/>
        </authorList>
    </citation>
    <scope>IDENTIFICATION BY MASS SPECTROMETRY [LARGE SCALE ANALYSIS]</scope>
</reference>
<reference key="14">
    <citation type="journal article" date="2012" name="Am. J. Hum. Genet.">
        <title>TMEM165 deficiency causes a congenital disorder of glycosylation.</title>
        <authorList>
            <person name="Foulquier F."/>
            <person name="Amyere M."/>
            <person name="Jaeken J."/>
            <person name="Zeevaert R."/>
            <person name="Schollen E."/>
            <person name="Race V."/>
            <person name="Bammens R."/>
            <person name="Morelle W."/>
            <person name="Rosnoblet C."/>
            <person name="Legrand D."/>
            <person name="Demaegd D."/>
            <person name="Buist N."/>
            <person name="Cheillan D."/>
            <person name="Guffon N."/>
            <person name="Morsomme P."/>
            <person name="Annaert W."/>
            <person name="Freeze H.H."/>
            <person name="Van Schaftingen E."/>
            <person name="Vikkula M."/>
            <person name="Matthijs G."/>
        </authorList>
    </citation>
    <scope>VARIANTS CDG2K HIS-126; CYS-126 AND ARG-304</scope>
    <scope>FUNCTION</scope>
    <scope>SUBCELLULAR LOCATION</scope>
    <scope>TISSUE SPECIFICITY</scope>
</reference>
<name>TM165_HUMAN</name>
<dbReference type="EMBL" id="AF132746">
    <property type="protein sequence ID" value="AAL75947.1"/>
    <property type="molecule type" value="mRNA"/>
</dbReference>
<dbReference type="EMBL" id="AF183409">
    <property type="protein sequence ID" value="AAG09678.1"/>
    <property type="molecule type" value="mRNA"/>
</dbReference>
<dbReference type="EMBL" id="AF220188">
    <property type="protein sequence ID" value="AAF67653.1"/>
    <property type="status" value="ALT_FRAME"/>
    <property type="molecule type" value="mRNA"/>
</dbReference>
<dbReference type="EMBL" id="AK290663">
    <property type="protein sequence ID" value="BAF83352.1"/>
    <property type="molecule type" value="mRNA"/>
</dbReference>
<dbReference type="EMBL" id="AK295289">
    <property type="protein sequence ID" value="BAG58273.1"/>
    <property type="molecule type" value="mRNA"/>
</dbReference>
<dbReference type="EMBL" id="AC069200">
    <property type="status" value="NOT_ANNOTATED_CDS"/>
    <property type="molecule type" value="Genomic_DNA"/>
</dbReference>
<dbReference type="EMBL" id="CH471057">
    <property type="protein sequence ID" value="EAX05467.1"/>
    <property type="molecule type" value="Genomic_DNA"/>
</dbReference>
<dbReference type="EMBL" id="BC003545">
    <property type="protein sequence ID" value="AAH03545.2"/>
    <property type="molecule type" value="mRNA"/>
</dbReference>
<dbReference type="EMBL" id="BC104980">
    <property type="protein sequence ID" value="AAI04981.1"/>
    <property type="molecule type" value="mRNA"/>
</dbReference>
<dbReference type="EMBL" id="BC104978">
    <property type="protein sequence ID" value="AAI04979.1"/>
    <property type="molecule type" value="mRNA"/>
</dbReference>
<dbReference type="EMBL" id="BC107582">
    <property type="protein sequence ID" value="AAI07583.1"/>
    <property type="molecule type" value="mRNA"/>
</dbReference>
<dbReference type="CCDS" id="CCDS3499.1">
    <molecule id="Q9HC07-1"/>
</dbReference>
<dbReference type="RefSeq" id="NP_060945.2">
    <molecule id="Q9HC07-1"/>
    <property type="nucleotide sequence ID" value="NM_018475.4"/>
</dbReference>
<dbReference type="RefSeq" id="XP_016863901.1">
    <molecule id="Q9HC07-2"/>
    <property type="nucleotide sequence ID" value="XM_017008412.2"/>
</dbReference>
<dbReference type="RefSeq" id="XP_054206477.1">
    <molecule id="Q9HC07-2"/>
    <property type="nucleotide sequence ID" value="XM_054350502.1"/>
</dbReference>
<dbReference type="RefSeq" id="XP_054206478.1">
    <molecule id="Q9HC07-2"/>
    <property type="nucleotide sequence ID" value="XM_054350503.1"/>
</dbReference>
<dbReference type="BioGRID" id="120960">
    <property type="interactions" value="131"/>
</dbReference>
<dbReference type="FunCoup" id="Q9HC07">
    <property type="interactions" value="3147"/>
</dbReference>
<dbReference type="IntAct" id="Q9HC07">
    <property type="interactions" value="64"/>
</dbReference>
<dbReference type="MINT" id="Q9HC07"/>
<dbReference type="STRING" id="9606.ENSP00000370736"/>
<dbReference type="TCDB" id="2.A.106.2.2">
    <property type="family name" value="the ca(2+):h(+) antiporter-2 (caca2) family"/>
</dbReference>
<dbReference type="GlyCosmos" id="Q9HC07">
    <property type="glycosylation" value="1 site, 1 glycan"/>
</dbReference>
<dbReference type="GlyGen" id="Q9HC07">
    <property type="glycosylation" value="5 sites, 3 O-linked glycans (4 sites)"/>
</dbReference>
<dbReference type="iPTMnet" id="Q9HC07"/>
<dbReference type="MetOSite" id="Q9HC07"/>
<dbReference type="PhosphoSitePlus" id="Q9HC07"/>
<dbReference type="SwissPalm" id="Q9HC07"/>
<dbReference type="BioMuta" id="TMEM165"/>
<dbReference type="DMDM" id="74718825"/>
<dbReference type="jPOST" id="Q9HC07"/>
<dbReference type="MassIVE" id="Q9HC07"/>
<dbReference type="PaxDb" id="9606-ENSP00000370736"/>
<dbReference type="PeptideAtlas" id="Q9HC07"/>
<dbReference type="ProteomicsDB" id="4251"/>
<dbReference type="ProteomicsDB" id="81617">
    <molecule id="Q9HC07-1"/>
</dbReference>
<dbReference type="Pumba" id="Q9HC07"/>
<dbReference type="Antibodypedia" id="44090">
    <property type="antibodies" value="126 antibodies from 22 providers"/>
</dbReference>
<dbReference type="DNASU" id="55858"/>
<dbReference type="Ensembl" id="ENST00000381334.10">
    <molecule id="Q9HC07-1"/>
    <property type="protein sequence ID" value="ENSP00000370736.5"/>
    <property type="gene ID" value="ENSG00000134851.13"/>
</dbReference>
<dbReference type="GeneID" id="55858"/>
<dbReference type="KEGG" id="hsa:55858"/>
<dbReference type="MANE-Select" id="ENST00000381334.10">
    <property type="protein sequence ID" value="ENSP00000370736.5"/>
    <property type="RefSeq nucleotide sequence ID" value="NM_018475.5"/>
    <property type="RefSeq protein sequence ID" value="NP_060945.2"/>
</dbReference>
<dbReference type="UCSC" id="uc003hax.4">
    <molecule id="Q9HC07-1"/>
    <property type="organism name" value="human"/>
</dbReference>
<dbReference type="AGR" id="HGNC:30760"/>
<dbReference type="CTD" id="55858"/>
<dbReference type="DisGeNET" id="55858"/>
<dbReference type="GeneCards" id="TMEM165"/>
<dbReference type="GeneReviews" id="TMEM165"/>
<dbReference type="HGNC" id="HGNC:30760">
    <property type="gene designation" value="TMEM165"/>
</dbReference>
<dbReference type="HPA" id="ENSG00000134851">
    <property type="expression patterns" value="Low tissue specificity"/>
</dbReference>
<dbReference type="MalaCards" id="TMEM165"/>
<dbReference type="MIM" id="614726">
    <property type="type" value="gene"/>
</dbReference>
<dbReference type="MIM" id="614727">
    <property type="type" value="phenotype"/>
</dbReference>
<dbReference type="neXtProt" id="NX_Q9HC07"/>
<dbReference type="OpenTargets" id="ENSG00000134851"/>
<dbReference type="Orphanet" id="314667">
    <property type="disease" value="TMEM165-CDG"/>
</dbReference>
<dbReference type="PharmGKB" id="PA147357214"/>
<dbReference type="VEuPathDB" id="HostDB:ENSG00000134851"/>
<dbReference type="eggNOG" id="KOG2881">
    <property type="taxonomic scope" value="Eukaryota"/>
</dbReference>
<dbReference type="GeneTree" id="ENSGT00390000005261"/>
<dbReference type="HOGENOM" id="CLU_040186_0_1_1"/>
<dbReference type="InParanoid" id="Q9HC07"/>
<dbReference type="OMA" id="ILGHAIC"/>
<dbReference type="OrthoDB" id="442680at2759"/>
<dbReference type="PAN-GO" id="Q9HC07">
    <property type="GO annotations" value="7 GO annotations based on evolutionary models"/>
</dbReference>
<dbReference type="PhylomeDB" id="Q9HC07"/>
<dbReference type="TreeFam" id="TF105960"/>
<dbReference type="PathwayCommons" id="Q9HC07"/>
<dbReference type="SignaLink" id="Q9HC07"/>
<dbReference type="BioGRID-ORCS" id="55858">
    <property type="hits" value="103 hits in 1178 CRISPR screens"/>
</dbReference>
<dbReference type="ChiTaRS" id="TMEM165">
    <property type="organism name" value="human"/>
</dbReference>
<dbReference type="GenomeRNAi" id="55858"/>
<dbReference type="Pharos" id="Q9HC07">
    <property type="development level" value="Tbio"/>
</dbReference>
<dbReference type="PRO" id="PR:Q9HC07"/>
<dbReference type="Proteomes" id="UP000005640">
    <property type="component" value="Chromosome 4"/>
</dbReference>
<dbReference type="RNAct" id="Q9HC07">
    <property type="molecule type" value="protein"/>
</dbReference>
<dbReference type="Bgee" id="ENSG00000134851">
    <property type="expression patterns" value="Expressed in corpus callosum and 196 other cell types or tissues"/>
</dbReference>
<dbReference type="ExpressionAtlas" id="Q9HC07">
    <property type="expression patterns" value="baseline and differential"/>
</dbReference>
<dbReference type="GO" id="GO:0033106">
    <property type="term" value="C:cis-Golgi network membrane"/>
    <property type="evidence" value="ECO:0000250"/>
    <property type="project" value="UniProtKB"/>
</dbReference>
<dbReference type="GO" id="GO:0010008">
    <property type="term" value="C:endosome membrane"/>
    <property type="evidence" value="ECO:0000314"/>
    <property type="project" value="UniProtKB"/>
</dbReference>
<dbReference type="GO" id="GO:0005794">
    <property type="term" value="C:Golgi apparatus"/>
    <property type="evidence" value="ECO:0000314"/>
    <property type="project" value="HPA"/>
</dbReference>
<dbReference type="GO" id="GO:0000139">
    <property type="term" value="C:Golgi membrane"/>
    <property type="evidence" value="ECO:0007669"/>
    <property type="project" value="UniProtKB-SubCell"/>
</dbReference>
<dbReference type="GO" id="GO:0043231">
    <property type="term" value="C:intracellular membrane-bounded organelle"/>
    <property type="evidence" value="ECO:0000314"/>
    <property type="project" value="HPA"/>
</dbReference>
<dbReference type="GO" id="GO:0005765">
    <property type="term" value="C:lysosomal membrane"/>
    <property type="evidence" value="ECO:0000314"/>
    <property type="project" value="UniProtKB"/>
</dbReference>
<dbReference type="GO" id="GO:0032588">
    <property type="term" value="C:trans-Golgi network membrane"/>
    <property type="evidence" value="ECO:0000314"/>
    <property type="project" value="UniProtKB"/>
</dbReference>
<dbReference type="GO" id="GO:0015297">
    <property type="term" value="F:antiporter activity"/>
    <property type="evidence" value="ECO:0007669"/>
    <property type="project" value="UniProtKB-KW"/>
</dbReference>
<dbReference type="GO" id="GO:0015085">
    <property type="term" value="F:calcium ion transmembrane transporter activity"/>
    <property type="evidence" value="ECO:0000318"/>
    <property type="project" value="GO_Central"/>
</dbReference>
<dbReference type="GO" id="GO:0005384">
    <property type="term" value="F:manganese ion transmembrane transporter activity"/>
    <property type="evidence" value="ECO:0000318"/>
    <property type="project" value="GO_Central"/>
</dbReference>
<dbReference type="GO" id="GO:0070588">
    <property type="term" value="P:calcium ion transmembrane transport"/>
    <property type="evidence" value="ECO:0000318"/>
    <property type="project" value="GO_Central"/>
</dbReference>
<dbReference type="GO" id="GO:0006816">
    <property type="term" value="P:calcium ion transport"/>
    <property type="evidence" value="ECO:0000314"/>
    <property type="project" value="UniProtKB"/>
</dbReference>
<dbReference type="GO" id="GO:0032468">
    <property type="term" value="P:Golgi calcium ion homeostasis"/>
    <property type="evidence" value="ECO:0000318"/>
    <property type="project" value="GO_Central"/>
</dbReference>
<dbReference type="GO" id="GO:0032472">
    <property type="term" value="P:Golgi calcium ion transport"/>
    <property type="evidence" value="ECO:0000314"/>
    <property type="project" value="UniProtKB"/>
</dbReference>
<dbReference type="GO" id="GO:0006874">
    <property type="term" value="P:intracellular calcium ion homeostasis"/>
    <property type="evidence" value="ECO:0000316"/>
    <property type="project" value="UniProtKB"/>
</dbReference>
<dbReference type="GO" id="GO:0071421">
    <property type="term" value="P:manganese ion transmembrane transport"/>
    <property type="evidence" value="ECO:0000318"/>
    <property type="project" value="GO_Central"/>
</dbReference>
<dbReference type="GO" id="GO:0006828">
    <property type="term" value="P:manganese ion transport"/>
    <property type="evidence" value="ECO:0000314"/>
    <property type="project" value="UniProtKB"/>
</dbReference>
<dbReference type="GO" id="GO:0006487">
    <property type="term" value="P:protein N-linked glycosylation"/>
    <property type="evidence" value="ECO:0000315"/>
    <property type="project" value="UniProtKB"/>
</dbReference>
<dbReference type="GO" id="GO:0035751">
    <property type="term" value="P:regulation of lysosomal lumen pH"/>
    <property type="evidence" value="ECO:0000315"/>
    <property type="project" value="UniProtKB"/>
</dbReference>
<dbReference type="InterPro" id="IPR001727">
    <property type="entry name" value="GDT1-like"/>
</dbReference>
<dbReference type="InterPro" id="IPR049555">
    <property type="entry name" value="GDT1-like_CS"/>
</dbReference>
<dbReference type="PANTHER" id="PTHR12608:SF1">
    <property type="entry name" value="TRANSMEMBRANE PROTEIN 165"/>
    <property type="match status" value="1"/>
</dbReference>
<dbReference type="PANTHER" id="PTHR12608">
    <property type="entry name" value="TRANSMEMBRANE PROTEIN HTP-1 RELATED"/>
    <property type="match status" value="1"/>
</dbReference>
<dbReference type="Pfam" id="PF01169">
    <property type="entry name" value="GDT1"/>
    <property type="match status" value="2"/>
</dbReference>
<dbReference type="PROSITE" id="PS01214">
    <property type="entry name" value="UPF0016"/>
    <property type="match status" value="1"/>
</dbReference>